<comment type="function">
    <text evidence="2">Probable proton-dependent permease that transports dipeptides.</text>
</comment>
<comment type="subunit">
    <text evidence="2">Monomer in solution. Exhibits a doughnut-like shape with a central, shallow depression and has a diameter of 8 nm.</text>
</comment>
<comment type="subcellular location">
    <subcellularLocation>
        <location evidence="2">Cell inner membrane</location>
        <topology evidence="2">Multi-pass membrane protein</topology>
    </subcellularLocation>
</comment>
<comment type="similarity">
    <text evidence="3">Belongs to the major facilitator superfamily. Proton-dependent oligopeptide transporter (POT/PTR) (TC 2.A.17) family. DtpD subfamily.</text>
</comment>
<gene>
    <name type="primary">dtpD</name>
    <name type="ordered locus">Z0860</name>
    <name type="ordered locus">ECs0734</name>
</gene>
<proteinExistence type="evidence at protein level"/>
<accession>Q8X9D3</accession>
<accession>Q7AGL2</accession>
<organism>
    <name type="scientific">Escherichia coli O157:H7</name>
    <dbReference type="NCBI Taxonomy" id="83334"/>
    <lineage>
        <taxon>Bacteria</taxon>
        <taxon>Pseudomonadati</taxon>
        <taxon>Pseudomonadota</taxon>
        <taxon>Gammaproteobacteria</taxon>
        <taxon>Enterobacterales</taxon>
        <taxon>Enterobacteriaceae</taxon>
        <taxon>Escherichia</taxon>
    </lineage>
</organism>
<evidence type="ECO:0000255" key="1"/>
<evidence type="ECO:0000269" key="2">
    <source>
    </source>
</evidence>
<evidence type="ECO:0000305" key="3"/>
<sequence length="493" mass="54230">MNKHASQPRAIYYVVALQIWEYFSFYGMRALLILYLTNQLKYNDTHAYELFSAYCSLVYVTPILGGFLADKVLGNRMAVMLGALLMAIGHVVLGASEIHPSFLYLSLAIIVCGYGLFKSNVSCLLGELYEPTDPRRDGGFSLMYAAGNVGSIIAPIACGYAQEEYSWAMGFGLAAVGMIAGLVIFLCGNRHFTHTRGVNKKVLRATNFLLPNWGWLLVLLVATPALITVLFWKEWSVYALIVATIIGLGVLAKIYRKAENQKQRKELRLIVTLTFFSMLFWAFAQQGGSSISLYIDRFVNRDMFGYTVPTAMFQSINAFAVMLCGVFLAWVVKESVAGNRTVRIWGKFALGLGLMSAGFCILTLSARWSAMYGHSSLPLMVLGLAVMGFAELFIDPVAMSQITRIEIPGVTGVLTGIYMLLSGAIANYLAGVIADQTSQASFDASGAINYSINAYIEVFDQITWGALACVGVVLMIWLYQALKFRNRALALES</sequence>
<protein>
    <recommendedName>
        <fullName>Dipeptide permease D</fullName>
    </recommendedName>
</protein>
<feature type="chain" id="PRO_0000395295" description="Dipeptide permease D">
    <location>
        <begin position="1"/>
        <end position="493"/>
    </location>
</feature>
<feature type="topological domain" description="Cytoplasmic" evidence="1">
    <location>
        <begin position="1"/>
        <end position="13"/>
    </location>
</feature>
<feature type="transmembrane region" description="Helical" evidence="1">
    <location>
        <begin position="14"/>
        <end position="34"/>
    </location>
</feature>
<feature type="topological domain" description="Periplasmic" evidence="1">
    <location>
        <begin position="35"/>
        <end position="48"/>
    </location>
</feature>
<feature type="transmembrane region" description="Helical" evidence="1">
    <location>
        <begin position="49"/>
        <end position="69"/>
    </location>
</feature>
<feature type="topological domain" description="Cytoplasmic" evidence="1">
    <location>
        <begin position="70"/>
        <end position="77"/>
    </location>
</feature>
<feature type="transmembrane region" description="Helical" evidence="1">
    <location>
        <begin position="78"/>
        <end position="98"/>
    </location>
</feature>
<feature type="topological domain" description="Periplasmic" evidence="1">
    <location>
        <begin position="99"/>
        <end position="100"/>
    </location>
</feature>
<feature type="transmembrane region" description="Helical" evidence="1">
    <location>
        <begin position="101"/>
        <end position="121"/>
    </location>
</feature>
<feature type="topological domain" description="Cytoplasmic" evidence="1">
    <location>
        <begin position="122"/>
        <end position="137"/>
    </location>
</feature>
<feature type="transmembrane region" description="Helical" evidence="1">
    <location>
        <begin position="138"/>
        <end position="158"/>
    </location>
</feature>
<feature type="topological domain" description="Periplasmic" evidence="1">
    <location>
        <begin position="159"/>
        <end position="166"/>
    </location>
</feature>
<feature type="transmembrane region" description="Helical" evidence="1">
    <location>
        <begin position="167"/>
        <end position="187"/>
    </location>
</feature>
<feature type="topological domain" description="Cytoplasmic" evidence="1">
    <location>
        <begin position="188"/>
        <end position="211"/>
    </location>
</feature>
<feature type="transmembrane region" description="Helical" evidence="1">
    <location>
        <begin position="212"/>
        <end position="232"/>
    </location>
</feature>
<feature type="topological domain" description="Periplasmic" evidence="1">
    <location>
        <begin position="233"/>
        <end position="234"/>
    </location>
</feature>
<feature type="transmembrane region" description="Helical" evidence="1">
    <location>
        <begin position="235"/>
        <end position="255"/>
    </location>
</feature>
<feature type="topological domain" description="Cytoplasmic" evidence="1">
    <location>
        <begin position="256"/>
        <end position="268"/>
    </location>
</feature>
<feature type="transmembrane region" description="Helical" evidence="1">
    <location>
        <begin position="269"/>
        <end position="289"/>
    </location>
</feature>
<feature type="topological domain" description="Periplasmic" evidence="1">
    <location>
        <begin position="290"/>
        <end position="311"/>
    </location>
</feature>
<feature type="transmembrane region" description="Helical" evidence="1">
    <location>
        <begin position="312"/>
        <end position="332"/>
    </location>
</feature>
<feature type="topological domain" description="Cytoplasmic" evidence="1">
    <location>
        <begin position="333"/>
        <end position="343"/>
    </location>
</feature>
<feature type="transmembrane region" description="Helical" evidence="1">
    <location>
        <begin position="344"/>
        <end position="364"/>
    </location>
</feature>
<feature type="topological domain" description="Periplasmic" evidence="1">
    <location>
        <begin position="365"/>
        <end position="378"/>
    </location>
</feature>
<feature type="transmembrane region" description="Helical" evidence="1">
    <location>
        <begin position="379"/>
        <end position="399"/>
    </location>
</feature>
<feature type="topological domain" description="Cytoplasmic" evidence="1">
    <location>
        <begin position="400"/>
        <end position="412"/>
    </location>
</feature>
<feature type="transmembrane region" description="Helical" evidence="1">
    <location>
        <begin position="413"/>
        <end position="433"/>
    </location>
</feature>
<feature type="topological domain" description="Periplasmic" evidence="1">
    <location>
        <begin position="434"/>
        <end position="461"/>
    </location>
</feature>
<feature type="transmembrane region" description="Helical" evidence="1">
    <location>
        <begin position="462"/>
        <end position="482"/>
    </location>
</feature>
<feature type="topological domain" description="Cytoplasmic" evidence="1">
    <location>
        <begin position="483"/>
        <end position="493"/>
    </location>
</feature>
<keyword id="KW-0997">Cell inner membrane</keyword>
<keyword id="KW-1003">Cell membrane</keyword>
<keyword id="KW-0472">Membrane</keyword>
<keyword id="KW-0571">Peptide transport</keyword>
<keyword id="KW-0653">Protein transport</keyword>
<keyword id="KW-1185">Reference proteome</keyword>
<keyword id="KW-0812">Transmembrane</keyword>
<keyword id="KW-1133">Transmembrane helix</keyword>
<keyword id="KW-0813">Transport</keyword>
<dbReference type="EMBL" id="AE005174">
    <property type="protein sequence ID" value="AAG55032.1"/>
    <property type="molecule type" value="Genomic_DNA"/>
</dbReference>
<dbReference type="EMBL" id="BA000007">
    <property type="protein sequence ID" value="BAB34157.1"/>
    <property type="molecule type" value="Genomic_DNA"/>
</dbReference>
<dbReference type="PIR" id="D85571">
    <property type="entry name" value="D85571"/>
</dbReference>
<dbReference type="PIR" id="F90720">
    <property type="entry name" value="F90720"/>
</dbReference>
<dbReference type="RefSeq" id="NP_308761.1">
    <property type="nucleotide sequence ID" value="NC_002695.1"/>
</dbReference>
<dbReference type="RefSeq" id="WP_001032707.1">
    <property type="nucleotide sequence ID" value="NZ_VOAI01000019.1"/>
</dbReference>
<dbReference type="SMR" id="Q8X9D3"/>
<dbReference type="STRING" id="155864.Z0860"/>
<dbReference type="GeneID" id="917103"/>
<dbReference type="KEGG" id="ece:Z0860"/>
<dbReference type="KEGG" id="ecs:ECs_0734"/>
<dbReference type="PATRIC" id="fig|386585.9.peg.850"/>
<dbReference type="eggNOG" id="COG3104">
    <property type="taxonomic scope" value="Bacteria"/>
</dbReference>
<dbReference type="HOGENOM" id="CLU_004790_0_0_6"/>
<dbReference type="OMA" id="LCHTKNL"/>
<dbReference type="Proteomes" id="UP000000558">
    <property type="component" value="Chromosome"/>
</dbReference>
<dbReference type="Proteomes" id="UP000002519">
    <property type="component" value="Chromosome"/>
</dbReference>
<dbReference type="GO" id="GO:0005886">
    <property type="term" value="C:plasma membrane"/>
    <property type="evidence" value="ECO:0007669"/>
    <property type="project" value="UniProtKB-SubCell"/>
</dbReference>
<dbReference type="GO" id="GO:0071916">
    <property type="term" value="F:dipeptide transmembrane transporter activity"/>
    <property type="evidence" value="ECO:0007669"/>
    <property type="project" value="UniProtKB-UniRule"/>
</dbReference>
<dbReference type="GO" id="GO:0015333">
    <property type="term" value="F:peptide:proton symporter activity"/>
    <property type="evidence" value="ECO:0007669"/>
    <property type="project" value="UniProtKB-UniRule"/>
</dbReference>
<dbReference type="GO" id="GO:0015031">
    <property type="term" value="P:protein transport"/>
    <property type="evidence" value="ECO:0007669"/>
    <property type="project" value="UniProtKB-KW"/>
</dbReference>
<dbReference type="CDD" id="cd17346">
    <property type="entry name" value="MFS_DtpA_like"/>
    <property type="match status" value="1"/>
</dbReference>
<dbReference type="FunFam" id="1.20.1250.20:FF:000035">
    <property type="entry name" value="Dipeptide permease D"/>
    <property type="match status" value="1"/>
</dbReference>
<dbReference type="Gene3D" id="1.20.1250.20">
    <property type="entry name" value="MFS general substrate transporter like domains"/>
    <property type="match status" value="1"/>
</dbReference>
<dbReference type="HAMAP" id="MF_01880">
    <property type="entry name" value="PTR2_DtpD_subfam"/>
    <property type="match status" value="1"/>
</dbReference>
<dbReference type="InterPro" id="IPR023777">
    <property type="entry name" value="AA/pep_transptr_DtpD"/>
</dbReference>
<dbReference type="InterPro" id="IPR005279">
    <property type="entry name" value="Dipep/tripep_permease"/>
</dbReference>
<dbReference type="InterPro" id="IPR020846">
    <property type="entry name" value="MFS_dom"/>
</dbReference>
<dbReference type="InterPro" id="IPR036259">
    <property type="entry name" value="MFS_trans_sf"/>
</dbReference>
<dbReference type="InterPro" id="IPR050171">
    <property type="entry name" value="MFS_Transporters"/>
</dbReference>
<dbReference type="InterPro" id="IPR000109">
    <property type="entry name" value="POT_fam"/>
</dbReference>
<dbReference type="InterPro" id="IPR018456">
    <property type="entry name" value="PTR2_symporter_CS"/>
</dbReference>
<dbReference type="NCBIfam" id="NF012006">
    <property type="entry name" value="PRK15462.1"/>
    <property type="match status" value="1"/>
</dbReference>
<dbReference type="NCBIfam" id="TIGR00924">
    <property type="entry name" value="yjdL_sub1_fam"/>
    <property type="match status" value="1"/>
</dbReference>
<dbReference type="PANTHER" id="PTHR23517:SF15">
    <property type="entry name" value="PROTON-DEPENDENT OLIGOPEPTIDE FAMILY TRANSPORT PROTEIN"/>
    <property type="match status" value="1"/>
</dbReference>
<dbReference type="PANTHER" id="PTHR23517">
    <property type="entry name" value="RESISTANCE PROTEIN MDTM, PUTATIVE-RELATED-RELATED"/>
    <property type="match status" value="1"/>
</dbReference>
<dbReference type="Pfam" id="PF00854">
    <property type="entry name" value="PTR2"/>
    <property type="match status" value="1"/>
</dbReference>
<dbReference type="SUPFAM" id="SSF103473">
    <property type="entry name" value="MFS general substrate transporter"/>
    <property type="match status" value="1"/>
</dbReference>
<dbReference type="PROSITE" id="PS50850">
    <property type="entry name" value="MFS"/>
    <property type="match status" value="1"/>
</dbReference>
<dbReference type="PROSITE" id="PS01022">
    <property type="entry name" value="PTR2_1"/>
    <property type="match status" value="1"/>
</dbReference>
<dbReference type="PROSITE" id="PS01023">
    <property type="entry name" value="PTR2_2"/>
    <property type="match status" value="1"/>
</dbReference>
<name>DTPD_ECO57</name>
<reference key="1">
    <citation type="journal article" date="2001" name="Nature">
        <title>Genome sequence of enterohaemorrhagic Escherichia coli O157:H7.</title>
        <authorList>
            <person name="Perna N.T."/>
            <person name="Plunkett G. III"/>
            <person name="Burland V."/>
            <person name="Mau B."/>
            <person name="Glasner J.D."/>
            <person name="Rose D.J."/>
            <person name="Mayhew G.F."/>
            <person name="Evans P.S."/>
            <person name="Gregor J."/>
            <person name="Kirkpatrick H.A."/>
            <person name="Posfai G."/>
            <person name="Hackett J."/>
            <person name="Klink S."/>
            <person name="Boutin A."/>
            <person name="Shao Y."/>
            <person name="Miller L."/>
            <person name="Grotbeck E.J."/>
            <person name="Davis N.W."/>
            <person name="Lim A."/>
            <person name="Dimalanta E.T."/>
            <person name="Potamousis K."/>
            <person name="Apodaca J."/>
            <person name="Anantharaman T.S."/>
            <person name="Lin J."/>
            <person name="Yen G."/>
            <person name="Schwartz D.C."/>
            <person name="Welch R.A."/>
            <person name="Blattner F.R."/>
        </authorList>
    </citation>
    <scope>NUCLEOTIDE SEQUENCE [LARGE SCALE GENOMIC DNA]</scope>
    <source>
        <strain>O157:H7 / EDL933 / ATCC 700927 / EHEC</strain>
    </source>
</reference>
<reference key="2">
    <citation type="journal article" date="2001" name="DNA Res.">
        <title>Complete genome sequence of enterohemorrhagic Escherichia coli O157:H7 and genomic comparison with a laboratory strain K-12.</title>
        <authorList>
            <person name="Hayashi T."/>
            <person name="Makino K."/>
            <person name="Ohnishi M."/>
            <person name="Kurokawa K."/>
            <person name="Ishii K."/>
            <person name="Yokoyama K."/>
            <person name="Han C.-G."/>
            <person name="Ohtsubo E."/>
            <person name="Nakayama K."/>
            <person name="Murata T."/>
            <person name="Tanaka M."/>
            <person name="Tobe T."/>
            <person name="Iida T."/>
            <person name="Takami H."/>
            <person name="Honda T."/>
            <person name="Sasakawa C."/>
            <person name="Ogasawara N."/>
            <person name="Yasunaga T."/>
            <person name="Kuhara S."/>
            <person name="Shiba T."/>
            <person name="Hattori M."/>
            <person name="Shinagawa H."/>
        </authorList>
    </citation>
    <scope>NUCLEOTIDE SEQUENCE [LARGE SCALE GENOMIC DNA]</scope>
    <source>
        <strain>O157:H7 / Sakai / RIMD 0509952 / EHEC</strain>
    </source>
</reference>
<reference key="3">
    <citation type="journal article" date="2009" name="J. Mol. Biol.">
        <title>Projection structure of DtpD (YbgH), a prokaryotic member of the peptide transporter family.</title>
        <authorList>
            <person name="Casagrande F."/>
            <person name="Harder D."/>
            <person name="Schenk A."/>
            <person name="Meury M."/>
            <person name="Ucurum Z."/>
            <person name="Engel A."/>
            <person name="Weitz D."/>
            <person name="Daniel H."/>
            <person name="Fotiadis D."/>
        </authorList>
    </citation>
    <scope>FUNCTION</scope>
    <scope>SUBUNIT</scope>
    <scope>SUBCELLULAR LOCATION</scope>
    <source>
        <strain>O157:H7 / EHEC</strain>
    </source>
</reference>